<reference key="1">
    <citation type="journal article" date="2004" name="Proc. Natl. Acad. Sci. U.S.A.">
        <title>Complete genomes of two clinical Staphylococcus aureus strains: evidence for the rapid evolution of virulence and drug resistance.</title>
        <authorList>
            <person name="Holden M.T.G."/>
            <person name="Feil E.J."/>
            <person name="Lindsay J.A."/>
            <person name="Peacock S.J."/>
            <person name="Day N.P.J."/>
            <person name="Enright M.C."/>
            <person name="Foster T.J."/>
            <person name="Moore C.E."/>
            <person name="Hurst L."/>
            <person name="Atkin R."/>
            <person name="Barron A."/>
            <person name="Bason N."/>
            <person name="Bentley S.D."/>
            <person name="Chillingworth C."/>
            <person name="Chillingworth T."/>
            <person name="Churcher C."/>
            <person name="Clark L."/>
            <person name="Corton C."/>
            <person name="Cronin A."/>
            <person name="Doggett J."/>
            <person name="Dowd L."/>
            <person name="Feltwell T."/>
            <person name="Hance Z."/>
            <person name="Harris B."/>
            <person name="Hauser H."/>
            <person name="Holroyd S."/>
            <person name="Jagels K."/>
            <person name="James K.D."/>
            <person name="Lennard N."/>
            <person name="Line A."/>
            <person name="Mayes R."/>
            <person name="Moule S."/>
            <person name="Mungall K."/>
            <person name="Ormond D."/>
            <person name="Quail M.A."/>
            <person name="Rabbinowitsch E."/>
            <person name="Rutherford K.M."/>
            <person name="Sanders M."/>
            <person name="Sharp S."/>
            <person name="Simmonds M."/>
            <person name="Stevens K."/>
            <person name="Whitehead S."/>
            <person name="Barrell B.G."/>
            <person name="Spratt B.G."/>
            <person name="Parkhill J."/>
        </authorList>
    </citation>
    <scope>NUCLEOTIDE SEQUENCE [LARGE SCALE GENOMIC DNA]</scope>
    <source>
        <strain>MSSA476</strain>
    </source>
</reference>
<protein>
    <recommendedName>
        <fullName>Sensor protein kinase HptS</fullName>
        <ecNumber>2.7.13.3</ecNumber>
    </recommendedName>
</protein>
<proteinExistence type="inferred from homology"/>
<evidence type="ECO:0000250" key="1"/>
<evidence type="ECO:0000250" key="2">
    <source>
        <dbReference type="UniProtKB" id="Q2G1E0"/>
    </source>
</evidence>
<evidence type="ECO:0000255" key="3"/>
<evidence type="ECO:0000305" key="4"/>
<name>HPTS_STAAS</name>
<accession>Q6GCQ2</accession>
<gene>
    <name type="primary">hptS</name>
    <name type="ordered locus">SAS0199</name>
</gene>
<sequence length="518" mass="60948">MTAYKPYRHQLRRSLFASTIFPVFLVIIIGLVSFYAIYIWIEHRTIHQHVDESQSSLHHTEKQIQTFITQHNNSFQELDLTNHHDVTATKRGLLKLIHQQPATLYYELSGPNQFITNNYEHLNTKNMYLFSTHQLKFKNSTYMLKIYMANTPRLSEIKKDSRQFALIVDQYDNILYANDDRFTIGEKYRPQQFGFMNESVKLNHADHRLIIYKDIHENIEDGITLLIVMAVVLVLLVIFGFISADNMAKRQTKDIETIIQKIYYAKNRHLGTYTPLKNNSELEEINNYIYDLFESNEQLIHSIEHTERRLRDIQLKEIERQFQPHFLFNTMQTIQYLITLSPKLAQTVVQQLSQMLRYSLRTNSHTVELNEELNYIEQYVAIQNIRFDDMIKLHIESSEEARHQTIGKMMLQPLIENAIKHGRDTESLDITIRLTLARQNLHVLVCDNGIGMSSSRLQYVRQSLNNDVFDTKHLGLNHLHNKAMIQYGSHARLHIFSKRNQGTLICYKIPLSRGNVDV</sequence>
<organism>
    <name type="scientific">Staphylococcus aureus (strain MSSA476)</name>
    <dbReference type="NCBI Taxonomy" id="282459"/>
    <lineage>
        <taxon>Bacteria</taxon>
        <taxon>Bacillati</taxon>
        <taxon>Bacillota</taxon>
        <taxon>Bacilli</taxon>
        <taxon>Bacillales</taxon>
        <taxon>Staphylococcaceae</taxon>
        <taxon>Staphylococcus</taxon>
    </lineage>
</organism>
<comment type="function">
    <text evidence="2">Member of the two-component regulatory system HptS/HptR that regulates genes involved in hexose phosphate transport system in response to changes in extracellular phosphate sources. May act as a sensor protein kinase which is autophosphorylated at a histidine residue and transfers its phosphate group to the conserved aspartic acid residue in the regulatory domain of HptS. In turn, HptS antagonizes CcpA-dependent transcription of a subset of CcpA-regulated genes involved in antibiotic susceptibility.</text>
</comment>
<comment type="catalytic activity">
    <reaction>
        <text>ATP + protein L-histidine = ADP + protein N-phospho-L-histidine.</text>
        <dbReference type="EC" id="2.7.13.3"/>
    </reaction>
</comment>
<comment type="subcellular location">
    <subcellularLocation>
        <location evidence="4">Cell membrane</location>
        <topology evidence="4">Multi-pass membrane protein</topology>
    </subcellularLocation>
</comment>
<comment type="PTM">
    <text evidence="1">Autophosphorylated.</text>
</comment>
<dbReference type="EC" id="2.7.13.3"/>
<dbReference type="EMBL" id="BX571857">
    <property type="protein sequence ID" value="CAG41967.1"/>
    <property type="molecule type" value="Genomic_DNA"/>
</dbReference>
<dbReference type="RefSeq" id="WP_000127997.1">
    <property type="nucleotide sequence ID" value="NC_002953.3"/>
</dbReference>
<dbReference type="SMR" id="Q6GCQ2"/>
<dbReference type="KEGG" id="sas:SAS0199"/>
<dbReference type="HOGENOM" id="CLU_525720_0_0_9"/>
<dbReference type="GO" id="GO:0005886">
    <property type="term" value="C:plasma membrane"/>
    <property type="evidence" value="ECO:0007669"/>
    <property type="project" value="UniProtKB-SubCell"/>
</dbReference>
<dbReference type="GO" id="GO:0005524">
    <property type="term" value="F:ATP binding"/>
    <property type="evidence" value="ECO:0007669"/>
    <property type="project" value="UniProtKB-KW"/>
</dbReference>
<dbReference type="GO" id="GO:0000155">
    <property type="term" value="F:phosphorelay sensor kinase activity"/>
    <property type="evidence" value="ECO:0007669"/>
    <property type="project" value="InterPro"/>
</dbReference>
<dbReference type="Gene3D" id="3.30.565.10">
    <property type="entry name" value="Histidine kinase-like ATPase, C-terminal domain"/>
    <property type="match status" value="1"/>
</dbReference>
<dbReference type="InterPro" id="IPR050640">
    <property type="entry name" value="Bact_2-comp_sensor_kinase"/>
</dbReference>
<dbReference type="InterPro" id="IPR036890">
    <property type="entry name" value="HATPase_C_sf"/>
</dbReference>
<dbReference type="InterPro" id="IPR010559">
    <property type="entry name" value="Sig_transdc_His_kin_internal"/>
</dbReference>
<dbReference type="PANTHER" id="PTHR34220">
    <property type="entry name" value="SENSOR HISTIDINE KINASE YPDA"/>
    <property type="match status" value="1"/>
</dbReference>
<dbReference type="PANTHER" id="PTHR34220:SF11">
    <property type="entry name" value="SENSOR PROTEIN KINASE HPTS"/>
    <property type="match status" value="1"/>
</dbReference>
<dbReference type="Pfam" id="PF02518">
    <property type="entry name" value="HATPase_c"/>
    <property type="match status" value="1"/>
</dbReference>
<dbReference type="Pfam" id="PF06580">
    <property type="entry name" value="His_kinase"/>
    <property type="match status" value="1"/>
</dbReference>
<dbReference type="SUPFAM" id="SSF55874">
    <property type="entry name" value="ATPase domain of HSP90 chaperone/DNA topoisomerase II/histidine kinase"/>
    <property type="match status" value="1"/>
</dbReference>
<keyword id="KW-0067">ATP-binding</keyword>
<keyword id="KW-1003">Cell membrane</keyword>
<keyword id="KW-0418">Kinase</keyword>
<keyword id="KW-0472">Membrane</keyword>
<keyword id="KW-0547">Nucleotide-binding</keyword>
<keyword id="KW-0597">Phosphoprotein</keyword>
<keyword id="KW-0808">Transferase</keyword>
<keyword id="KW-0812">Transmembrane</keyword>
<keyword id="KW-1133">Transmembrane helix</keyword>
<keyword id="KW-0902">Two-component regulatory system</keyword>
<feature type="chain" id="PRO_0000299122" description="Sensor protein kinase HptS">
    <location>
        <begin position="1"/>
        <end position="518"/>
    </location>
</feature>
<feature type="transmembrane region" description="Helical" evidence="3">
    <location>
        <begin position="20"/>
        <end position="40"/>
    </location>
</feature>
<feature type="transmembrane region" description="Helical" evidence="3">
    <location>
        <begin position="222"/>
        <end position="242"/>
    </location>
</feature>
<feature type="domain" description="Histidine kinase">
    <location>
        <begin position="297"/>
        <end position="513"/>
    </location>
</feature>
<feature type="modified residue" description="Phosphohistidine; by autocatalysis" evidence="1">
    <location>
        <position position="325"/>
    </location>
</feature>